<name>RNFD_ACEWD</name>
<dbReference type="EC" id="7.2.1.2" evidence="2 3"/>
<dbReference type="EMBL" id="FJ416148">
    <property type="protein sequence ID" value="ACR23743.1"/>
    <property type="molecule type" value="Genomic_DNA"/>
</dbReference>
<dbReference type="EMBL" id="CP002987">
    <property type="protein sequence ID" value="AFA48979.1"/>
    <property type="molecule type" value="Genomic_DNA"/>
</dbReference>
<dbReference type="RefSeq" id="WP_014356579.1">
    <property type="nucleotide sequence ID" value="NC_016894.1"/>
</dbReference>
<dbReference type="PDB" id="9ERI">
    <property type="method" value="EM"/>
    <property type="resolution" value="3.30 A"/>
    <property type="chains" value="D=1-318"/>
</dbReference>
<dbReference type="PDB" id="9ERJ">
    <property type="method" value="EM"/>
    <property type="resolution" value="2.90 A"/>
    <property type="chains" value="D=1-318"/>
</dbReference>
<dbReference type="PDB" id="9ERK">
    <property type="method" value="EM"/>
    <property type="resolution" value="2.80 A"/>
    <property type="chains" value="D=1-318"/>
</dbReference>
<dbReference type="PDB" id="9ERL">
    <property type="method" value="EM"/>
    <property type="resolution" value="3.00 A"/>
    <property type="chains" value="D=1-318"/>
</dbReference>
<dbReference type="PDBsum" id="9ERI"/>
<dbReference type="PDBsum" id="9ERJ"/>
<dbReference type="PDBsum" id="9ERK"/>
<dbReference type="PDBsum" id="9ERL"/>
<dbReference type="EMDB" id="EMD-19915"/>
<dbReference type="EMDB" id="EMD-19916"/>
<dbReference type="EMDB" id="EMD-19919"/>
<dbReference type="EMDB" id="EMD-19920"/>
<dbReference type="SMR" id="H6LC31"/>
<dbReference type="STRING" id="931626.Awo_c22050"/>
<dbReference type="TCDB" id="3.D.6.1.2">
    <property type="family name" value="the ion (h(+) or na(+))-translocating nadh:ferredoxin oxidoreductase (nfo or rnf) family"/>
</dbReference>
<dbReference type="KEGG" id="awo:Awo_c22050"/>
<dbReference type="eggNOG" id="COG4658">
    <property type="taxonomic scope" value="Bacteria"/>
</dbReference>
<dbReference type="HOGENOM" id="CLU_042020_1_0_9"/>
<dbReference type="OrthoDB" id="9776359at2"/>
<dbReference type="BioCyc" id="MetaCyc:MONOMER-21342"/>
<dbReference type="BRENDA" id="7.2.1.2">
    <property type="organism ID" value="52"/>
</dbReference>
<dbReference type="Proteomes" id="UP000007177">
    <property type="component" value="Chromosome"/>
</dbReference>
<dbReference type="GO" id="GO:0005886">
    <property type="term" value="C:plasma membrane"/>
    <property type="evidence" value="ECO:0007669"/>
    <property type="project" value="UniProtKB-SubCell"/>
</dbReference>
<dbReference type="GO" id="GO:0022900">
    <property type="term" value="P:electron transport chain"/>
    <property type="evidence" value="ECO:0007669"/>
    <property type="project" value="UniProtKB-UniRule"/>
</dbReference>
<dbReference type="GO" id="GO:0055085">
    <property type="term" value="P:transmembrane transport"/>
    <property type="evidence" value="ECO:0007669"/>
    <property type="project" value="InterPro"/>
</dbReference>
<dbReference type="HAMAP" id="MF_00462">
    <property type="entry name" value="RsxD_RnfD"/>
    <property type="match status" value="1"/>
</dbReference>
<dbReference type="InterPro" id="IPR004338">
    <property type="entry name" value="NqrB/RnfD"/>
</dbReference>
<dbReference type="InterPro" id="IPR011303">
    <property type="entry name" value="RnfD_bac"/>
</dbReference>
<dbReference type="NCBIfam" id="TIGR01946">
    <property type="entry name" value="rnfD"/>
    <property type="match status" value="1"/>
</dbReference>
<dbReference type="PANTHER" id="PTHR30578">
    <property type="entry name" value="ELECTRON TRANSPORT COMPLEX PROTEIN RNFD"/>
    <property type="match status" value="1"/>
</dbReference>
<dbReference type="PANTHER" id="PTHR30578:SF0">
    <property type="entry name" value="ION-TRANSLOCATING OXIDOREDUCTASE COMPLEX SUBUNIT D"/>
    <property type="match status" value="1"/>
</dbReference>
<dbReference type="Pfam" id="PF03116">
    <property type="entry name" value="NQR2_RnfD_RnfE"/>
    <property type="match status" value="1"/>
</dbReference>
<protein>
    <recommendedName>
        <fullName evidence="5">Na(+)-translocating ferredoxin:NAD(+) oxidoreductase complex subunit D</fullName>
        <ecNumber evidence="2 3">7.2.1.2</ecNumber>
    </recommendedName>
    <alternativeName>
        <fullName evidence="1 5">Rnf electron transport complex subunit D</fullName>
    </alternativeName>
</protein>
<organism>
    <name type="scientific">Acetobacterium woodii (strain ATCC 29683 / DSM 1030 / JCM 2381 / KCTC 1655 / WB1)</name>
    <dbReference type="NCBI Taxonomy" id="931626"/>
    <lineage>
        <taxon>Bacteria</taxon>
        <taxon>Bacillati</taxon>
        <taxon>Bacillota</taxon>
        <taxon>Clostridia</taxon>
        <taxon>Eubacteriales</taxon>
        <taxon>Eubacteriaceae</taxon>
        <taxon>Acetobacterium</taxon>
    </lineage>
</organism>
<gene>
    <name evidence="1 4" type="primary">rnfD</name>
    <name evidence="7" type="ordered locus">Awo_c22050</name>
</gene>
<reference key="1">
    <citation type="journal article" date="2007" name="J. Bacteriol.">
        <title>Dissection of the caffeate respiratory chain in the acetogen Acetobacterium woodii: identification of an Rnf-type NADH dehydrogenase as a potential coupling site.</title>
        <authorList>
            <person name="Imkamp F."/>
            <person name="Biegel E."/>
            <person name="Jayamani E."/>
            <person name="Buckel W."/>
            <person name="Muller V."/>
        </authorList>
    </citation>
    <scope>NUCLEOTIDE SEQUENCE [GENOMIC DNA]</scope>
    <source>
        <strain>ATCC 29683 / DSM 1030 / JCM 2381 / KCTC 1655 / WB1</strain>
    </source>
</reference>
<reference key="2">
    <citation type="journal article" date="2009" name="Environ. Microbiol.">
        <title>Genetic, immunological and biochemical evidence for a Rnf complex in the acetogen Acetobacterium woodii.</title>
        <authorList>
            <person name="Biegel E."/>
            <person name="Schmidt S."/>
            <person name="Muller V."/>
        </authorList>
    </citation>
    <scope>NUCLEOTIDE SEQUENCE [GENOMIC DNA]</scope>
    <source>
        <strain>ATCC 29683 / DSM 1030 / JCM 2381 / KCTC 1655 / WB1</strain>
    </source>
</reference>
<reference key="3">
    <citation type="submission" date="2011-07" db="EMBL/GenBank/DDBJ databases">
        <title>Complete genome sequence of Acetobacterium woodii.</title>
        <authorList>
            <person name="Poehlein A."/>
            <person name="Schmidt S."/>
            <person name="Kaster A.-K."/>
            <person name="Goenrich M."/>
            <person name="Vollmers J."/>
            <person name="Thuermer A."/>
            <person name="Gottschalk G."/>
            <person name="Thauer R.K."/>
            <person name="Daniel R."/>
            <person name="Mueller V."/>
        </authorList>
    </citation>
    <scope>NUCLEOTIDE SEQUENCE [LARGE SCALE GENOMIC DNA]</scope>
    <source>
        <strain>ATCC 29683 / DSM 1030 / JCM 2381 / KCTC 1655 / WB1</strain>
    </source>
</reference>
<reference key="4">
    <citation type="journal article" date="2010" name="Proc. Natl. Acad. Sci. U.S.A.">
        <title>Bacterial Na+-translocating ferredoxin:NAD+ oxidoreductase.</title>
        <authorList>
            <person name="Biegel E."/>
            <person name="Mueller V."/>
        </authorList>
    </citation>
    <scope>FUNCTION</scope>
    <scope>CATALYTIC ACTIVITY</scope>
    <scope>SUBUNIT</scope>
    <source>
        <strain>ATCC 29683 / DSM 1030 / JCM 2381 / KCTC 1655 / WB1</strain>
    </source>
</reference>
<reference key="5">
    <citation type="journal article" date="2013" name="J. Biol. Chem.">
        <title>The ferredoxin:NAD+ oxidoreductase (Rnf) from the acetogen Acetobacterium woodii requires Na+ and is reversibly coupled to the membrane potential.</title>
        <authorList>
            <person name="Hess V."/>
            <person name="Schuchmann K."/>
            <person name="Mueller V."/>
        </authorList>
    </citation>
    <scope>FUNCTION</scope>
    <scope>CATALYTIC ACTIVITY</scope>
    <source>
        <strain>ATCC 29683 / DSM 1030 / JCM 2381 / KCTC 1655 / WB1</strain>
    </source>
</reference>
<sequence length="318" mass="33739">MNELNLTVSSSPHIRAKHSTASIMQNVIIALLPALAVAGYVFGLWALALVAICVISSVATEAVIQKLLKKPITVNDWSAVVTGVLLAFNLPINAPWWIGVVGSVFAIAIVKQCFGGLGQNFINPALAARAFLLASWPGHMTSTAYIPLTDTVTTATPLALLKAGETGSMPSTLDLFTGLNGVYGCIGEISALALLIGGLYLIYKGIISWRIPTIYLLTIAIFALLVGQDPIVHMVSGGVMLGAFFMATDYASSPVTAKGQIIYAIGCGLITMIIRLYGGYPEGCSYSILLMNVATPLIERFTKERIYGVTKIKKEAKA</sequence>
<feature type="chain" id="PRO_0000443490" description="Na(+)-translocating ferredoxin:NAD(+) oxidoreductase complex subunit D">
    <location>
        <begin position="1"/>
        <end position="318"/>
    </location>
</feature>
<feature type="transmembrane region" description="Helical" evidence="1">
    <location>
        <begin position="35"/>
        <end position="55"/>
    </location>
</feature>
<feature type="transmembrane region" description="Helical" evidence="1">
    <location>
        <begin position="77"/>
        <end position="99"/>
    </location>
</feature>
<feature type="transmembrane region" description="Helical" evidence="1">
    <location>
        <begin position="114"/>
        <end position="134"/>
    </location>
</feature>
<feature type="transmembrane region" description="Helical" evidence="1">
    <location>
        <begin position="182"/>
        <end position="202"/>
    </location>
</feature>
<feature type="transmembrane region" description="Helical" evidence="1">
    <location>
        <begin position="206"/>
        <end position="226"/>
    </location>
</feature>
<feature type="transmembrane region" description="Helical" evidence="1">
    <location>
        <begin position="261"/>
        <end position="281"/>
    </location>
</feature>
<feature type="modified residue" description="FMN phosphoryl threonine" evidence="1">
    <location>
        <position position="156"/>
    </location>
</feature>
<feature type="sequence conflict" description="In Ref. 2; ACR23743." evidence="5" ref="2">
    <original>KH</original>
    <variation>NN</variation>
    <location>
        <begin position="17"/>
        <end position="18"/>
    </location>
</feature>
<feature type="sequence conflict" description="In Ref. 2; ACR23743." evidence="5" ref="2">
    <original>VVGSV</original>
    <variation>AVGSL</variation>
    <location>
        <begin position="100"/>
        <end position="104"/>
    </location>
</feature>
<feature type="sequence conflict" description="In Ref. 2; ACR23743." evidence="5" ref="2">
    <original>PALAARAFLL</original>
    <variation>TGTCCSSLFIG</variation>
    <location>
        <begin position="124"/>
        <end position="133"/>
    </location>
</feature>
<keyword id="KW-0002">3D-structure</keyword>
<keyword id="KW-1003">Cell membrane</keyword>
<keyword id="KW-0249">Electron transport</keyword>
<keyword id="KW-0285">Flavoprotein</keyword>
<keyword id="KW-0288">FMN</keyword>
<keyword id="KW-0472">Membrane</keyword>
<keyword id="KW-0520">NAD</keyword>
<keyword id="KW-0597">Phosphoprotein</keyword>
<keyword id="KW-1185">Reference proteome</keyword>
<keyword id="KW-1278">Translocase</keyword>
<keyword id="KW-0812">Transmembrane</keyword>
<keyword id="KW-1133">Transmembrane helix</keyword>
<keyword id="KW-0813">Transport</keyword>
<proteinExistence type="evidence at protein level"/>
<comment type="function">
    <text evidence="2 3">Part of a membrane-bound complex that couples electron transfer with translocation of ions across the membrane. Couples electron transfer from reduced ferredoxin to NAD(+) with electrogenic movement of Na(+) out of the cell. Involved in caffeate respiration.</text>
</comment>
<comment type="catalytic activity">
    <reaction evidence="2 3">
        <text>2 reduced [2Fe-2S]-[ferredoxin] + Na(+)(in) + NAD(+) + H(+) = 2 oxidized [2Fe-2S]-[ferredoxin] + Na(+)(out) + NADH</text>
        <dbReference type="Rhea" id="RHEA:46800"/>
        <dbReference type="Rhea" id="RHEA-COMP:10000"/>
        <dbReference type="Rhea" id="RHEA-COMP:10001"/>
        <dbReference type="ChEBI" id="CHEBI:15378"/>
        <dbReference type="ChEBI" id="CHEBI:29101"/>
        <dbReference type="ChEBI" id="CHEBI:33737"/>
        <dbReference type="ChEBI" id="CHEBI:33738"/>
        <dbReference type="ChEBI" id="CHEBI:57540"/>
        <dbReference type="ChEBI" id="CHEBI:57945"/>
        <dbReference type="EC" id="7.2.1.2"/>
    </reaction>
</comment>
<comment type="cofactor">
    <cofactor evidence="1">
        <name>FMN</name>
        <dbReference type="ChEBI" id="CHEBI:58210"/>
    </cofactor>
</comment>
<comment type="subunit">
    <text evidence="1 6">The complex is composed of six subunits: RnfA, RnfB, RnfC, RnfD, RnfE and RnfG.</text>
</comment>
<comment type="subcellular location">
    <subcellularLocation>
        <location evidence="1">Cell membrane</location>
        <topology evidence="1">Multi-pass membrane protein</topology>
    </subcellularLocation>
</comment>
<comment type="similarity">
    <text evidence="1">Belongs to the NqrB/RnfD family.</text>
</comment>
<accession>H6LC31</accession>
<accession>C4N8U1</accession>
<evidence type="ECO:0000255" key="1">
    <source>
        <dbReference type="HAMAP-Rule" id="MF_00462"/>
    </source>
</evidence>
<evidence type="ECO:0000269" key="2">
    <source>
    </source>
</evidence>
<evidence type="ECO:0000269" key="3">
    <source>
    </source>
</evidence>
<evidence type="ECO:0000303" key="4">
    <source>
    </source>
</evidence>
<evidence type="ECO:0000305" key="5"/>
<evidence type="ECO:0000305" key="6">
    <source>
    </source>
</evidence>
<evidence type="ECO:0000312" key="7">
    <source>
        <dbReference type="EMBL" id="AFA48979.1"/>
    </source>
</evidence>